<name>RS8_BRUSU</name>
<gene>
    <name evidence="1" type="primary">rpsH</name>
    <name type="ordered locus">BR1219</name>
    <name type="ordered locus">BS1330_I1215</name>
</gene>
<sequence length="132" mass="14604">MSVSDPLGDMLTRIRNAVGRKKTKVSTPASKLRARVLDVLQAEGYIRGYTQSEFENGKAEIEIELKYYEGVPVIREITRVSKPGRRVYVSVKSIPQVANGLGISILSTPKGVMADHEAREQNVGGELLCRIF</sequence>
<keyword id="KW-0687">Ribonucleoprotein</keyword>
<keyword id="KW-0689">Ribosomal protein</keyword>
<keyword id="KW-0694">RNA-binding</keyword>
<keyword id="KW-0699">rRNA-binding</keyword>
<organism>
    <name type="scientific">Brucella suis biovar 1 (strain 1330)</name>
    <dbReference type="NCBI Taxonomy" id="204722"/>
    <lineage>
        <taxon>Bacteria</taxon>
        <taxon>Pseudomonadati</taxon>
        <taxon>Pseudomonadota</taxon>
        <taxon>Alphaproteobacteria</taxon>
        <taxon>Hyphomicrobiales</taxon>
        <taxon>Brucellaceae</taxon>
        <taxon>Brucella/Ochrobactrum group</taxon>
        <taxon>Brucella</taxon>
    </lineage>
</organism>
<feature type="chain" id="PRO_0000126379" description="Small ribosomal subunit protein uS8">
    <location>
        <begin position="1"/>
        <end position="132"/>
    </location>
</feature>
<accession>Q8G086</accession>
<accession>G0KAE0</accession>
<dbReference type="EMBL" id="AE014291">
    <property type="protein sequence ID" value="AAN30138.1"/>
    <property type="molecule type" value="Genomic_DNA"/>
</dbReference>
<dbReference type="EMBL" id="CP002997">
    <property type="protein sequence ID" value="AEM18556.1"/>
    <property type="molecule type" value="Genomic_DNA"/>
</dbReference>
<dbReference type="RefSeq" id="WP_004683921.1">
    <property type="nucleotide sequence ID" value="NZ_KN046804.1"/>
</dbReference>
<dbReference type="SMR" id="Q8G086"/>
<dbReference type="GeneID" id="97533538"/>
<dbReference type="KEGG" id="bms:BR1219"/>
<dbReference type="KEGG" id="bsi:BS1330_I1215"/>
<dbReference type="PATRIC" id="fig|204722.21.peg.2257"/>
<dbReference type="HOGENOM" id="CLU_098428_0_0_5"/>
<dbReference type="Proteomes" id="UP000007104">
    <property type="component" value="Chromosome I"/>
</dbReference>
<dbReference type="GO" id="GO:1990904">
    <property type="term" value="C:ribonucleoprotein complex"/>
    <property type="evidence" value="ECO:0007669"/>
    <property type="project" value="UniProtKB-KW"/>
</dbReference>
<dbReference type="GO" id="GO:0005840">
    <property type="term" value="C:ribosome"/>
    <property type="evidence" value="ECO:0007669"/>
    <property type="project" value="UniProtKB-KW"/>
</dbReference>
<dbReference type="GO" id="GO:0019843">
    <property type="term" value="F:rRNA binding"/>
    <property type="evidence" value="ECO:0007669"/>
    <property type="project" value="UniProtKB-UniRule"/>
</dbReference>
<dbReference type="GO" id="GO:0003735">
    <property type="term" value="F:structural constituent of ribosome"/>
    <property type="evidence" value="ECO:0007669"/>
    <property type="project" value="InterPro"/>
</dbReference>
<dbReference type="GO" id="GO:0006412">
    <property type="term" value="P:translation"/>
    <property type="evidence" value="ECO:0007669"/>
    <property type="project" value="UniProtKB-UniRule"/>
</dbReference>
<dbReference type="FunFam" id="3.30.1370.30:FF:000002">
    <property type="entry name" value="30S ribosomal protein S8"/>
    <property type="match status" value="1"/>
</dbReference>
<dbReference type="FunFam" id="3.30.1490.10:FF:000001">
    <property type="entry name" value="30S ribosomal protein S8"/>
    <property type="match status" value="1"/>
</dbReference>
<dbReference type="Gene3D" id="3.30.1370.30">
    <property type="match status" value="1"/>
</dbReference>
<dbReference type="Gene3D" id="3.30.1490.10">
    <property type="match status" value="1"/>
</dbReference>
<dbReference type="HAMAP" id="MF_01302_B">
    <property type="entry name" value="Ribosomal_uS8_B"/>
    <property type="match status" value="1"/>
</dbReference>
<dbReference type="InterPro" id="IPR000630">
    <property type="entry name" value="Ribosomal_uS8"/>
</dbReference>
<dbReference type="InterPro" id="IPR047863">
    <property type="entry name" value="Ribosomal_uS8_CS"/>
</dbReference>
<dbReference type="InterPro" id="IPR035987">
    <property type="entry name" value="Ribosomal_uS8_sf"/>
</dbReference>
<dbReference type="NCBIfam" id="NF001109">
    <property type="entry name" value="PRK00136.1"/>
    <property type="match status" value="1"/>
</dbReference>
<dbReference type="PANTHER" id="PTHR11758">
    <property type="entry name" value="40S RIBOSOMAL PROTEIN S15A"/>
    <property type="match status" value="1"/>
</dbReference>
<dbReference type="Pfam" id="PF00410">
    <property type="entry name" value="Ribosomal_S8"/>
    <property type="match status" value="1"/>
</dbReference>
<dbReference type="SUPFAM" id="SSF56047">
    <property type="entry name" value="Ribosomal protein S8"/>
    <property type="match status" value="1"/>
</dbReference>
<dbReference type="PROSITE" id="PS00053">
    <property type="entry name" value="RIBOSOMAL_S8"/>
    <property type="match status" value="1"/>
</dbReference>
<protein>
    <recommendedName>
        <fullName evidence="1">Small ribosomal subunit protein uS8</fullName>
    </recommendedName>
    <alternativeName>
        <fullName evidence="2">30S ribosomal protein S8</fullName>
    </alternativeName>
</protein>
<reference key="1">
    <citation type="journal article" date="2002" name="Proc. Natl. Acad. Sci. U.S.A.">
        <title>The Brucella suis genome reveals fundamental similarities between animal and plant pathogens and symbionts.</title>
        <authorList>
            <person name="Paulsen I.T."/>
            <person name="Seshadri R."/>
            <person name="Nelson K.E."/>
            <person name="Eisen J.A."/>
            <person name="Heidelberg J.F."/>
            <person name="Read T.D."/>
            <person name="Dodson R.J."/>
            <person name="Umayam L.A."/>
            <person name="Brinkac L.M."/>
            <person name="Beanan M.J."/>
            <person name="Daugherty S.C."/>
            <person name="DeBoy R.T."/>
            <person name="Durkin A.S."/>
            <person name="Kolonay J.F."/>
            <person name="Madupu R."/>
            <person name="Nelson W.C."/>
            <person name="Ayodeji B."/>
            <person name="Kraul M."/>
            <person name="Shetty J."/>
            <person name="Malek J.A."/>
            <person name="Van Aken S.E."/>
            <person name="Riedmuller S."/>
            <person name="Tettelin H."/>
            <person name="Gill S.R."/>
            <person name="White O."/>
            <person name="Salzberg S.L."/>
            <person name="Hoover D.L."/>
            <person name="Lindler L.E."/>
            <person name="Halling S.M."/>
            <person name="Boyle S.M."/>
            <person name="Fraser C.M."/>
        </authorList>
    </citation>
    <scope>NUCLEOTIDE SEQUENCE [LARGE SCALE GENOMIC DNA]</scope>
    <source>
        <strain>1330</strain>
    </source>
</reference>
<reference key="2">
    <citation type="journal article" date="2011" name="J. Bacteriol.">
        <title>Revised genome sequence of Brucella suis 1330.</title>
        <authorList>
            <person name="Tae H."/>
            <person name="Shallom S."/>
            <person name="Settlage R."/>
            <person name="Preston D."/>
            <person name="Adams L.G."/>
            <person name="Garner H.R."/>
        </authorList>
    </citation>
    <scope>NUCLEOTIDE SEQUENCE [LARGE SCALE GENOMIC DNA]</scope>
    <source>
        <strain>1330</strain>
    </source>
</reference>
<comment type="function">
    <text evidence="1">One of the primary rRNA binding proteins, it binds directly to 16S rRNA central domain where it helps coordinate assembly of the platform of the 30S subunit.</text>
</comment>
<comment type="subunit">
    <text evidence="1">Part of the 30S ribosomal subunit. Contacts proteins S5 and S12.</text>
</comment>
<comment type="similarity">
    <text evidence="1">Belongs to the universal ribosomal protein uS8 family.</text>
</comment>
<evidence type="ECO:0000255" key="1">
    <source>
        <dbReference type="HAMAP-Rule" id="MF_01302"/>
    </source>
</evidence>
<evidence type="ECO:0000305" key="2"/>
<proteinExistence type="inferred from homology"/>